<sequence length="85" mass="9499">MSSGGLLLLLGLLTLCAELTPVSSRKRHPDCDKPPDTKICQTVVRAFYYKPSAKRCVQFRYGGCNGNGNHFKSDHLCRCECLEYS</sequence>
<accession>Q1RPT0</accession>
<name>VKTH4_BUNMU</name>
<comment type="function">
    <text evidence="1">Beta-bungarotoxins are presynaptic neurotoxins of the venom. The B chain is homologous to venom basic protease inhibitors but has no protease inhibitor activity and blocks voltage-gated potassium channels (Kv) (By similarity).</text>
</comment>
<comment type="subunit">
    <text evidence="3">Heterodimer; disulfide-linked. The A chains have phospholipase A2 activity and the B chains show homology with the basic protease inhibitors.</text>
</comment>
<comment type="subcellular location">
    <subcellularLocation>
        <location evidence="1">Secreted</location>
    </subcellularLocation>
</comment>
<comment type="tissue specificity">
    <text>Expressed by the venom gland.</text>
</comment>
<comment type="similarity">
    <text evidence="4">Belongs to the venom Kunitz-type family.</text>
</comment>
<feature type="signal peptide" evidence="1">
    <location>
        <begin position="1"/>
        <end position="24"/>
    </location>
</feature>
<feature type="chain" id="PRO_5000076282" description="Kunitz-type serine protease inhibitor homolog beta-bungarotoxin B4 chain">
    <location>
        <begin position="25"/>
        <end position="85"/>
    </location>
</feature>
<feature type="domain" description="BPTI/Kunitz inhibitor" evidence="2">
    <location>
        <begin position="31"/>
        <end position="81"/>
    </location>
</feature>
<feature type="disulfide bond" evidence="2">
    <location>
        <begin position="31"/>
        <end position="81"/>
    </location>
</feature>
<feature type="disulfide bond" evidence="2">
    <location>
        <begin position="40"/>
        <end position="64"/>
    </location>
</feature>
<feature type="disulfide bond" evidence="2">
    <location>
        <begin position="56"/>
        <end position="77"/>
    </location>
</feature>
<feature type="disulfide bond" description="Interchain (with an A chain)" evidence="2">
    <location>
        <position position="79"/>
    </location>
</feature>
<organism>
    <name type="scientific">Bungarus multicinctus</name>
    <name type="common">Many-banded krait</name>
    <dbReference type="NCBI Taxonomy" id="8616"/>
    <lineage>
        <taxon>Eukaryota</taxon>
        <taxon>Metazoa</taxon>
        <taxon>Chordata</taxon>
        <taxon>Craniata</taxon>
        <taxon>Vertebrata</taxon>
        <taxon>Euteleostomi</taxon>
        <taxon>Lepidosauria</taxon>
        <taxon>Squamata</taxon>
        <taxon>Bifurcata</taxon>
        <taxon>Unidentata</taxon>
        <taxon>Episquamata</taxon>
        <taxon>Toxicofera</taxon>
        <taxon>Serpentes</taxon>
        <taxon>Colubroidea</taxon>
        <taxon>Elapidae</taxon>
        <taxon>Bungarinae</taxon>
        <taxon>Bungarus</taxon>
    </lineage>
</organism>
<dbReference type="EMBL" id="AM050152">
    <property type="protein sequence ID" value="CAJ18319.1"/>
    <property type="molecule type" value="Genomic_DNA"/>
</dbReference>
<dbReference type="SMR" id="Q1RPT0"/>
<dbReference type="GO" id="GO:0005615">
    <property type="term" value="C:extracellular space"/>
    <property type="evidence" value="ECO:0007669"/>
    <property type="project" value="TreeGrafter"/>
</dbReference>
<dbReference type="GO" id="GO:0015459">
    <property type="term" value="F:potassium channel regulator activity"/>
    <property type="evidence" value="ECO:0007669"/>
    <property type="project" value="UniProtKB-KW"/>
</dbReference>
<dbReference type="GO" id="GO:0004867">
    <property type="term" value="F:serine-type endopeptidase inhibitor activity"/>
    <property type="evidence" value="ECO:0007669"/>
    <property type="project" value="InterPro"/>
</dbReference>
<dbReference type="GO" id="GO:0090729">
    <property type="term" value="F:toxin activity"/>
    <property type="evidence" value="ECO:0007669"/>
    <property type="project" value="UniProtKB-KW"/>
</dbReference>
<dbReference type="CDD" id="cd22619">
    <property type="entry name" value="Kunitz_B2B"/>
    <property type="match status" value="1"/>
</dbReference>
<dbReference type="Gene3D" id="4.10.410.10">
    <property type="entry name" value="Pancreatic trypsin inhibitor Kunitz domain"/>
    <property type="match status" value="1"/>
</dbReference>
<dbReference type="InterPro" id="IPR002223">
    <property type="entry name" value="Kunitz_BPTI"/>
</dbReference>
<dbReference type="InterPro" id="IPR036880">
    <property type="entry name" value="Kunitz_BPTI_sf"/>
</dbReference>
<dbReference type="InterPro" id="IPR020901">
    <property type="entry name" value="Prtase_inh_Kunz-CS"/>
</dbReference>
<dbReference type="InterPro" id="IPR050098">
    <property type="entry name" value="TFPI/VKTCI-like"/>
</dbReference>
<dbReference type="PANTHER" id="PTHR10083:SF374">
    <property type="entry name" value="BPTI_KUNITZ INHIBITOR DOMAIN-CONTAINING PROTEIN"/>
    <property type="match status" value="1"/>
</dbReference>
<dbReference type="PANTHER" id="PTHR10083">
    <property type="entry name" value="KUNITZ-TYPE PROTEASE INHIBITOR-RELATED"/>
    <property type="match status" value="1"/>
</dbReference>
<dbReference type="Pfam" id="PF00014">
    <property type="entry name" value="Kunitz_BPTI"/>
    <property type="match status" value="1"/>
</dbReference>
<dbReference type="PRINTS" id="PR00759">
    <property type="entry name" value="BASICPTASE"/>
</dbReference>
<dbReference type="SMART" id="SM00131">
    <property type="entry name" value="KU"/>
    <property type="match status" value="1"/>
</dbReference>
<dbReference type="SUPFAM" id="SSF57362">
    <property type="entry name" value="BPTI-like"/>
    <property type="match status" value="1"/>
</dbReference>
<dbReference type="PROSITE" id="PS00280">
    <property type="entry name" value="BPTI_KUNITZ_1"/>
    <property type="match status" value="1"/>
</dbReference>
<dbReference type="PROSITE" id="PS50279">
    <property type="entry name" value="BPTI_KUNITZ_2"/>
    <property type="match status" value="1"/>
</dbReference>
<reference key="1">
    <citation type="journal article" date="2006" name="Toxicon">
        <title>Divergence of genes encoding B chains of beta-bungarotoxins.</title>
        <authorList>
            <person name="Cheng Y.-C."/>
            <person name="Chen K.-C."/>
            <person name="Lin S.-K."/>
            <person name="Chang L.-S."/>
        </authorList>
    </citation>
    <scope>NUCLEOTIDE SEQUENCE [GENOMIC DNA]</scope>
    <scope>SUBUNIT</scope>
    <source>
        <tissue>Venom</tissue>
        <tissue>Venom gland</tissue>
    </source>
</reference>
<protein>
    <recommendedName>
        <fullName>Kunitz-type serine protease inhibitor homolog beta-bungarotoxin B4 chain</fullName>
    </recommendedName>
</protein>
<evidence type="ECO:0000250" key="1"/>
<evidence type="ECO:0000255" key="2">
    <source>
        <dbReference type="PROSITE-ProRule" id="PRU00031"/>
    </source>
</evidence>
<evidence type="ECO:0000269" key="3">
    <source>
    </source>
</evidence>
<evidence type="ECO:0000305" key="4"/>
<keyword id="KW-1015">Disulfide bond</keyword>
<keyword id="KW-0872">Ion channel impairing toxin</keyword>
<keyword id="KW-0528">Neurotoxin</keyword>
<keyword id="KW-0632">Potassium channel impairing toxin</keyword>
<keyword id="KW-0638">Presynaptic neurotoxin</keyword>
<keyword id="KW-0964">Secreted</keyword>
<keyword id="KW-0732">Signal</keyword>
<keyword id="KW-0800">Toxin</keyword>
<keyword id="KW-1220">Voltage-gated potassium channel impairing toxin</keyword>
<proteinExistence type="evidence at protein level"/>